<gene>
    <name type="primary">proS</name>
    <name type="ordered locus">MSMEG_2621</name>
    <name type="ordered locus">MSMEI_2559</name>
</gene>
<keyword id="KW-0030">Aminoacyl-tRNA synthetase</keyword>
<keyword id="KW-0067">ATP-binding</keyword>
<keyword id="KW-0963">Cytoplasm</keyword>
<keyword id="KW-1017">Isopeptide bond</keyword>
<keyword id="KW-0436">Ligase</keyword>
<keyword id="KW-0547">Nucleotide-binding</keyword>
<keyword id="KW-0648">Protein biosynthesis</keyword>
<keyword id="KW-1185">Reference proteome</keyword>
<keyword id="KW-0832">Ubl conjugation</keyword>
<proteinExistence type="evidence at protein level"/>
<sequence>MITRMSELFLRTLRDDPADAEVPSHKLLIRAGYVRAVGPGIYSWLPLGLRVLRKIENVVRSEMNAIGAQEILLPALLPRGPYETTNRWTEYGDTLFRLQDRRNNDYLLGPTHEELFTLTVKGEYSSYKDFPVILYQIQTKYRDEARPRAGILRGREFVMKDSYSFDVDDDGLKNAYYQHREAYQRIFARLGVRYVIVSAVSGAMGGSASEEFLAESEVGEDTFVRCVESGYAANVEAVITRAPEAQPTEGLPEAKVYDTPDTPTIATLVEWANSASLPQFEGRTVTAADTLKNVLLKTREPGGEWELLAVGVPGDREVDEKRLGAALEPAEFALLDDADFAANPFLVKGYVGPKALQDNGVRYLVDPRVVHGSSWITGADAPNRHVVGLVAGRDFTPDGTIEAAEVRDGDPSPDGAGVLTSARGIEIGHIFQLGRKYTDAFSADVLGEDGKPLRLTMGSYGIGVSRLVAVIAEQQHDQLGLRWPSSVAPFDVHVVVANKDAGARAGAAELVADLDRLGHEVLFDDRQASPGVKFKDAELLGMPWIVVVGRGWADGVVELRNRFTGETREIAADGAAAEISSVLAG</sequence>
<name>SYP_MYCS2</name>
<accession>A0QVM0</accession>
<accession>I7G0E1</accession>
<evidence type="ECO:0000250" key="1"/>
<evidence type="ECO:0000269" key="2">
    <source>
    </source>
</evidence>
<evidence type="ECO:0000305" key="3"/>
<comment type="function">
    <text evidence="1">Catalyzes the attachment of proline to tRNA(Pro) in a two-step reaction: proline is first activated by ATP to form Pro-AMP and then transferred to the acceptor end of tRNA(Pro). As ProRS can inadvertently accommodate and process non-cognate amino acids such as alanine and cysteine, to avoid such errors it has two additional distinct editing activities against alanine. One activity is designated as 'pretransfer' editing and involves the tRNA(Pro)-independent hydrolysis of activated Ala-AMP. The other activity is designated 'posttransfer' editing and involves deacylation of mischarged Ala-tRNA(Pro). The misacylated Cys-tRNA(Pro) is not edited by ProRS (By similarity).</text>
</comment>
<comment type="catalytic activity">
    <reaction>
        <text>tRNA(Pro) + L-proline + ATP = L-prolyl-tRNA(Pro) + AMP + diphosphate</text>
        <dbReference type="Rhea" id="RHEA:14305"/>
        <dbReference type="Rhea" id="RHEA-COMP:9700"/>
        <dbReference type="Rhea" id="RHEA-COMP:9702"/>
        <dbReference type="ChEBI" id="CHEBI:30616"/>
        <dbReference type="ChEBI" id="CHEBI:33019"/>
        <dbReference type="ChEBI" id="CHEBI:60039"/>
        <dbReference type="ChEBI" id="CHEBI:78442"/>
        <dbReference type="ChEBI" id="CHEBI:78532"/>
        <dbReference type="ChEBI" id="CHEBI:456215"/>
        <dbReference type="EC" id="6.1.1.15"/>
    </reaction>
</comment>
<comment type="subunit">
    <text evidence="1">Homodimer.</text>
</comment>
<comment type="subcellular location">
    <subcellularLocation>
        <location evidence="1">Cytoplasm</location>
    </subcellularLocation>
</comment>
<comment type="domain">
    <text evidence="1">Consists of three domains: the N-terminal catalytic domain, the editing domain and the C-terminal anticodon-binding domain.</text>
</comment>
<comment type="similarity">
    <text evidence="3">Belongs to the class-II aminoacyl-tRNA synthetase family. ProS type 1 subfamily.</text>
</comment>
<organism>
    <name type="scientific">Mycolicibacterium smegmatis (strain ATCC 700084 / mc(2)155)</name>
    <name type="common">Mycobacterium smegmatis</name>
    <dbReference type="NCBI Taxonomy" id="246196"/>
    <lineage>
        <taxon>Bacteria</taxon>
        <taxon>Bacillati</taxon>
        <taxon>Actinomycetota</taxon>
        <taxon>Actinomycetes</taxon>
        <taxon>Mycobacteriales</taxon>
        <taxon>Mycobacteriaceae</taxon>
        <taxon>Mycolicibacterium</taxon>
    </lineage>
</organism>
<dbReference type="EC" id="6.1.1.15"/>
<dbReference type="EMBL" id="CP000480">
    <property type="protein sequence ID" value="ABK74453.1"/>
    <property type="molecule type" value="Genomic_DNA"/>
</dbReference>
<dbReference type="EMBL" id="CP001663">
    <property type="protein sequence ID" value="AFP39027.1"/>
    <property type="molecule type" value="Genomic_DNA"/>
</dbReference>
<dbReference type="RefSeq" id="WP_003894002.1">
    <property type="nucleotide sequence ID" value="NZ_SIJM01000029.1"/>
</dbReference>
<dbReference type="RefSeq" id="YP_886958.1">
    <property type="nucleotide sequence ID" value="NC_008596.1"/>
</dbReference>
<dbReference type="SMR" id="A0QVM0"/>
<dbReference type="STRING" id="246196.MSMEG_2621"/>
<dbReference type="PaxDb" id="246196-MSMEI_2559"/>
<dbReference type="KEGG" id="msb:LJ00_13045"/>
<dbReference type="KEGG" id="msg:MSMEI_2559"/>
<dbReference type="KEGG" id="msm:MSMEG_2621"/>
<dbReference type="PATRIC" id="fig|246196.19.peg.2587"/>
<dbReference type="eggNOG" id="COG0442">
    <property type="taxonomic scope" value="Bacteria"/>
</dbReference>
<dbReference type="OrthoDB" id="9809052at2"/>
<dbReference type="BRENDA" id="6.1.1.15">
    <property type="organism ID" value="3512"/>
</dbReference>
<dbReference type="Proteomes" id="UP000000757">
    <property type="component" value="Chromosome"/>
</dbReference>
<dbReference type="Proteomes" id="UP000006158">
    <property type="component" value="Chromosome"/>
</dbReference>
<dbReference type="GO" id="GO:0005829">
    <property type="term" value="C:cytosol"/>
    <property type="evidence" value="ECO:0007669"/>
    <property type="project" value="TreeGrafter"/>
</dbReference>
<dbReference type="GO" id="GO:0002161">
    <property type="term" value="F:aminoacyl-tRNA deacylase activity"/>
    <property type="evidence" value="ECO:0007669"/>
    <property type="project" value="InterPro"/>
</dbReference>
<dbReference type="GO" id="GO:0005524">
    <property type="term" value="F:ATP binding"/>
    <property type="evidence" value="ECO:0007669"/>
    <property type="project" value="UniProtKB-UniRule"/>
</dbReference>
<dbReference type="GO" id="GO:0004827">
    <property type="term" value="F:proline-tRNA ligase activity"/>
    <property type="evidence" value="ECO:0007669"/>
    <property type="project" value="UniProtKB-UniRule"/>
</dbReference>
<dbReference type="GO" id="GO:0006433">
    <property type="term" value="P:prolyl-tRNA aminoacylation"/>
    <property type="evidence" value="ECO:0007669"/>
    <property type="project" value="UniProtKB-UniRule"/>
</dbReference>
<dbReference type="CDD" id="cd00861">
    <property type="entry name" value="ProRS_anticodon_short"/>
    <property type="match status" value="1"/>
</dbReference>
<dbReference type="CDD" id="cd00779">
    <property type="entry name" value="ProRS_core_prok"/>
    <property type="match status" value="1"/>
</dbReference>
<dbReference type="FunFam" id="3.30.930.10:FF:000065">
    <property type="entry name" value="Proline--tRNA ligase"/>
    <property type="match status" value="1"/>
</dbReference>
<dbReference type="FunFam" id="3.30.930.10:FF:000070">
    <property type="entry name" value="Proline--tRNA ligase"/>
    <property type="match status" value="1"/>
</dbReference>
<dbReference type="FunFam" id="3.40.50.800:FF:000024">
    <property type="entry name" value="Proline--tRNA ligase"/>
    <property type="match status" value="1"/>
</dbReference>
<dbReference type="Gene3D" id="3.40.50.800">
    <property type="entry name" value="Anticodon-binding domain"/>
    <property type="match status" value="1"/>
</dbReference>
<dbReference type="Gene3D" id="3.30.930.10">
    <property type="entry name" value="Bira Bifunctional Protein, Domain 2"/>
    <property type="match status" value="2"/>
</dbReference>
<dbReference type="Gene3D" id="3.90.960.10">
    <property type="entry name" value="YbaK/aminoacyl-tRNA synthetase-associated domain"/>
    <property type="match status" value="1"/>
</dbReference>
<dbReference type="HAMAP" id="MF_01569">
    <property type="entry name" value="Pro_tRNA_synth_type1"/>
    <property type="match status" value="1"/>
</dbReference>
<dbReference type="InterPro" id="IPR002314">
    <property type="entry name" value="aa-tRNA-synt_IIb"/>
</dbReference>
<dbReference type="InterPro" id="IPR006195">
    <property type="entry name" value="aa-tRNA-synth_II"/>
</dbReference>
<dbReference type="InterPro" id="IPR045864">
    <property type="entry name" value="aa-tRNA-synth_II/BPL/LPL"/>
</dbReference>
<dbReference type="InterPro" id="IPR004154">
    <property type="entry name" value="Anticodon-bd"/>
</dbReference>
<dbReference type="InterPro" id="IPR036621">
    <property type="entry name" value="Anticodon-bd_dom_sf"/>
</dbReference>
<dbReference type="InterPro" id="IPR002316">
    <property type="entry name" value="Pro-tRNA-ligase_IIa"/>
</dbReference>
<dbReference type="InterPro" id="IPR004500">
    <property type="entry name" value="Pro-tRNA-synth_IIa_bac-type"/>
</dbReference>
<dbReference type="InterPro" id="IPR023717">
    <property type="entry name" value="Pro-tRNA-Synthase_IIa_type1"/>
</dbReference>
<dbReference type="InterPro" id="IPR050062">
    <property type="entry name" value="Pro-tRNA_synthetase"/>
</dbReference>
<dbReference type="InterPro" id="IPR044140">
    <property type="entry name" value="ProRS_anticodon_short"/>
</dbReference>
<dbReference type="InterPro" id="IPR033730">
    <property type="entry name" value="ProRS_core_prok"/>
</dbReference>
<dbReference type="InterPro" id="IPR036754">
    <property type="entry name" value="YbaK/aa-tRNA-synt-asso_dom_sf"/>
</dbReference>
<dbReference type="InterPro" id="IPR007214">
    <property type="entry name" value="YbaK/aa-tRNA-synth-assoc-dom"/>
</dbReference>
<dbReference type="NCBIfam" id="NF006625">
    <property type="entry name" value="PRK09194.1"/>
    <property type="match status" value="1"/>
</dbReference>
<dbReference type="NCBIfam" id="TIGR00409">
    <property type="entry name" value="proS_fam_II"/>
    <property type="match status" value="1"/>
</dbReference>
<dbReference type="PANTHER" id="PTHR42753">
    <property type="entry name" value="MITOCHONDRIAL RIBOSOME PROTEIN L39/PROLYL-TRNA LIGASE FAMILY MEMBER"/>
    <property type="match status" value="1"/>
</dbReference>
<dbReference type="PANTHER" id="PTHR42753:SF2">
    <property type="entry name" value="PROLINE--TRNA LIGASE"/>
    <property type="match status" value="1"/>
</dbReference>
<dbReference type="Pfam" id="PF03129">
    <property type="entry name" value="HGTP_anticodon"/>
    <property type="match status" value="1"/>
</dbReference>
<dbReference type="Pfam" id="PF00587">
    <property type="entry name" value="tRNA-synt_2b"/>
    <property type="match status" value="1"/>
</dbReference>
<dbReference type="Pfam" id="PF04073">
    <property type="entry name" value="tRNA_edit"/>
    <property type="match status" value="1"/>
</dbReference>
<dbReference type="PRINTS" id="PR01046">
    <property type="entry name" value="TRNASYNTHPRO"/>
</dbReference>
<dbReference type="SUPFAM" id="SSF52954">
    <property type="entry name" value="Class II aaRS ABD-related"/>
    <property type="match status" value="1"/>
</dbReference>
<dbReference type="SUPFAM" id="SSF55681">
    <property type="entry name" value="Class II aaRS and biotin synthetases"/>
    <property type="match status" value="1"/>
</dbReference>
<dbReference type="SUPFAM" id="SSF55826">
    <property type="entry name" value="YbaK/ProRS associated domain"/>
    <property type="match status" value="1"/>
</dbReference>
<dbReference type="PROSITE" id="PS50862">
    <property type="entry name" value="AA_TRNA_LIGASE_II"/>
    <property type="match status" value="1"/>
</dbReference>
<feature type="chain" id="PRO_0000396807" description="Proline--tRNA ligase">
    <location>
        <begin position="1"/>
        <end position="585"/>
    </location>
</feature>
<feature type="cross-link" description="Isoglutamyl lysine isopeptide (Lys-Gln) (interchain with Q-Cter in protein Pup)" evidence="2">
    <location>
        <position position="173"/>
    </location>
</feature>
<reference key="1">
    <citation type="submission" date="2006-10" db="EMBL/GenBank/DDBJ databases">
        <authorList>
            <person name="Fleischmann R.D."/>
            <person name="Dodson R.J."/>
            <person name="Haft D.H."/>
            <person name="Merkel J.S."/>
            <person name="Nelson W.C."/>
            <person name="Fraser C.M."/>
        </authorList>
    </citation>
    <scope>NUCLEOTIDE SEQUENCE [LARGE SCALE GENOMIC DNA]</scope>
    <source>
        <strain>ATCC 700084 / mc(2)155</strain>
    </source>
</reference>
<reference key="2">
    <citation type="journal article" date="2007" name="Genome Biol.">
        <title>Interrupted coding sequences in Mycobacterium smegmatis: authentic mutations or sequencing errors?</title>
        <authorList>
            <person name="Deshayes C."/>
            <person name="Perrodou E."/>
            <person name="Gallien S."/>
            <person name="Euphrasie D."/>
            <person name="Schaeffer C."/>
            <person name="Van-Dorsselaer A."/>
            <person name="Poch O."/>
            <person name="Lecompte O."/>
            <person name="Reyrat J.-M."/>
        </authorList>
    </citation>
    <scope>NUCLEOTIDE SEQUENCE [LARGE SCALE GENOMIC DNA]</scope>
    <source>
        <strain>ATCC 700084 / mc(2)155</strain>
    </source>
</reference>
<reference key="3">
    <citation type="journal article" date="2009" name="Genome Res.">
        <title>Ortho-proteogenomics: multiple proteomes investigation through orthology and a new MS-based protocol.</title>
        <authorList>
            <person name="Gallien S."/>
            <person name="Perrodou E."/>
            <person name="Carapito C."/>
            <person name="Deshayes C."/>
            <person name="Reyrat J.-M."/>
            <person name="Van Dorsselaer A."/>
            <person name="Poch O."/>
            <person name="Schaeffer C."/>
            <person name="Lecompte O."/>
        </authorList>
    </citation>
    <scope>NUCLEOTIDE SEQUENCE [LARGE SCALE GENOMIC DNA]</scope>
    <source>
        <strain>ATCC 700084 / mc(2)155</strain>
    </source>
</reference>
<reference key="4">
    <citation type="journal article" date="2010" name="Mol. Biosyst.">
        <title>Expansion of the mycobacterial 'PUPylome'.</title>
        <authorList>
            <person name="Watrous J."/>
            <person name="Burns K."/>
            <person name="Liu W.T."/>
            <person name="Patel A."/>
            <person name="Hook V."/>
            <person name="Bafna V."/>
            <person name="Barry C.E. III"/>
            <person name="Bark S."/>
            <person name="Dorrestein P.C."/>
        </authorList>
    </citation>
    <scope>PUPYLATION AT LYS-173</scope>
    <scope>IDENTIFICATION BY MASS SPECTROMETRY</scope>
</reference>
<protein>
    <recommendedName>
        <fullName>Proline--tRNA ligase</fullName>
        <ecNumber>6.1.1.15</ecNumber>
    </recommendedName>
    <alternativeName>
        <fullName>Prolyl-tRNA synthetase</fullName>
        <shortName>ProRS</shortName>
    </alternativeName>
</protein>